<dbReference type="EMBL" id="AM406671">
    <property type="protein sequence ID" value="CAL96980.1"/>
    <property type="molecule type" value="Genomic_DNA"/>
</dbReference>
<dbReference type="RefSeq" id="WP_011675414.1">
    <property type="nucleotide sequence ID" value="NC_009004.1"/>
</dbReference>
<dbReference type="SMR" id="A2RI86"/>
<dbReference type="STRING" id="416870.llmg_0375"/>
<dbReference type="KEGG" id="llm:llmg_0375"/>
<dbReference type="eggNOG" id="COG1113">
    <property type="taxonomic scope" value="Bacteria"/>
</dbReference>
<dbReference type="HOGENOM" id="CLU_007946_9_3_9"/>
<dbReference type="OrthoDB" id="9780162at2"/>
<dbReference type="PhylomeDB" id="A2RI86"/>
<dbReference type="Proteomes" id="UP000000364">
    <property type="component" value="Chromosome"/>
</dbReference>
<dbReference type="GO" id="GO:0005886">
    <property type="term" value="C:plasma membrane"/>
    <property type="evidence" value="ECO:0007669"/>
    <property type="project" value="UniProtKB-SubCell"/>
</dbReference>
<dbReference type="GO" id="GO:0006865">
    <property type="term" value="P:amino acid transport"/>
    <property type="evidence" value="ECO:0007669"/>
    <property type="project" value="UniProtKB-KW"/>
</dbReference>
<dbReference type="GO" id="GO:0055085">
    <property type="term" value="P:transmembrane transport"/>
    <property type="evidence" value="ECO:0007669"/>
    <property type="project" value="InterPro"/>
</dbReference>
<dbReference type="FunFam" id="1.20.1740.10:FF:000001">
    <property type="entry name" value="Amino acid permease"/>
    <property type="match status" value="1"/>
</dbReference>
<dbReference type="Gene3D" id="1.20.1740.10">
    <property type="entry name" value="Amino acid/polyamine transporter I"/>
    <property type="match status" value="1"/>
</dbReference>
<dbReference type="InterPro" id="IPR004841">
    <property type="entry name" value="AA-permease/SLC12A_dom"/>
</dbReference>
<dbReference type="InterPro" id="IPR004840">
    <property type="entry name" value="Amino_acid_permease_CS"/>
</dbReference>
<dbReference type="PANTHER" id="PTHR43495:SF2">
    <property type="entry name" value="D-SERINE_D-ALANINE_GLYCINE TRANSPORTER"/>
    <property type="match status" value="1"/>
</dbReference>
<dbReference type="PANTHER" id="PTHR43495">
    <property type="entry name" value="GABA PERMEASE"/>
    <property type="match status" value="1"/>
</dbReference>
<dbReference type="Pfam" id="PF00324">
    <property type="entry name" value="AA_permease"/>
    <property type="match status" value="1"/>
</dbReference>
<dbReference type="PIRSF" id="PIRSF006060">
    <property type="entry name" value="AA_transporter"/>
    <property type="match status" value="1"/>
</dbReference>
<dbReference type="PROSITE" id="PS00218">
    <property type="entry name" value="AMINO_ACID_PERMEASE_1"/>
    <property type="match status" value="1"/>
</dbReference>
<sequence length="460" mass="51523">MNTNQNDENIEKQPSQRGLKNRHIQLIAIAGTIGTGLFLGAGKSIHLTGPSIIFVYLIIGALMYILLRAIGEMLYQDPSQHSFLNFVSRYMGAKPGYFIQWSYLLVVVFVAMAELIAIGTYINFWLPDLPIWMTEVFVLVLLTLLNTLNPKFFGETEFWFGMIKIVAIIGLILTAIILIFSHYHTGTDTVSLTNITKGFEFFPNGVSSFFESFQMVMFAFVSMEFIGMTAAETDNPRPTLKKAINQIPIRIVLFYIGALLAIMSIYQWRDIPADKSPFVTIFQLIGIKWAAALVNFVVLTSAASALNSALFSITRNLYSLSQLNDDKILKPFTKFSKAGVPVNALLFTSLLILFTPFISMIPAISNSFVFITSVATNLFLVVYLMTLITYLKYRKSKDFDPSGFTLPAAHIFIPLAIAGFVLIFISLFCFKDTIIPAIGSVIWVLIFGLFTFFRKIKTAD</sequence>
<organism>
    <name type="scientific">Lactococcus lactis subsp. cremoris (strain MG1363)</name>
    <dbReference type="NCBI Taxonomy" id="416870"/>
    <lineage>
        <taxon>Bacteria</taxon>
        <taxon>Bacillati</taxon>
        <taxon>Bacillota</taxon>
        <taxon>Bacilli</taxon>
        <taxon>Lactobacillales</taxon>
        <taxon>Streptococcaceae</taxon>
        <taxon>Lactococcus</taxon>
        <taxon>Lactococcus cremoris subsp. cremoris</taxon>
    </lineage>
</organism>
<accession>A2RI86</accession>
<proteinExistence type="evidence at protein level"/>
<comment type="function">
    <text evidence="2 3">Transports DL-alanine, DL-serine and glycine (PubMed:23144255, PubMed:25535271). The preferred substrate is DL-alanine. L-serine is a low-affinity substrate (PubMed:25535271).</text>
</comment>
<comment type="biophysicochemical properties">
    <kinetics>
        <KM evidence="3">20 uM for L-alanine</KM>
        <KM evidence="3">356 uM for L-serine</KM>
        <Vmax evidence="3">115.0 nmol/min/mg enzyme with L-alanine as substrate</Vmax>
        <Vmax evidence="3">216.0 nmol/min/mg enzyme with L-serine as substrate</Vmax>
        <text evidence="3">Not stereoselective. Affinities for the D- and L- isomers of alanine and serine are in the same range.</text>
    </kinetics>
</comment>
<comment type="subcellular location">
    <subcellularLocation>
        <location evidence="5">Cell membrane</location>
        <topology evidence="1">Multi-pass membrane protein</topology>
    </subcellularLocation>
</comment>
<comment type="disruption phenotype">
    <text evidence="3">Deletion mutant is only marginally affected in medium that contains only free amino acids as a source of amino acids. Mutant shows almost no change in serine and L-threonine uptake, but shows a strong decrease in L-alanine uptake. SerP1/serP2 double mutant is completely devoid of uptake activity of either L-serine, L-threonine or L-alanine.</text>
</comment>
<comment type="similarity">
    <text evidence="5">Belongs to the amino acid-polyamine-organocation (APC) superfamily. Amino acid transporter (AAT) (TC 2.A.3.1) family.</text>
</comment>
<protein>
    <recommendedName>
        <fullName evidence="5">DL-alanine permease SerP2</fullName>
    </recommendedName>
</protein>
<evidence type="ECO:0000255" key="1"/>
<evidence type="ECO:0000269" key="2">
    <source>
    </source>
</evidence>
<evidence type="ECO:0000269" key="3">
    <source>
    </source>
</evidence>
<evidence type="ECO:0000303" key="4">
    <source>
    </source>
</evidence>
<evidence type="ECO:0000305" key="5"/>
<evidence type="ECO:0000312" key="6">
    <source>
        <dbReference type="EMBL" id="CAL96980.1"/>
    </source>
</evidence>
<keyword id="KW-0029">Amino-acid transport</keyword>
<keyword id="KW-1003">Cell membrane</keyword>
<keyword id="KW-0472">Membrane</keyword>
<keyword id="KW-0812">Transmembrane</keyword>
<keyword id="KW-1133">Transmembrane helix</keyword>
<keyword id="KW-0813">Transport</keyword>
<gene>
    <name evidence="4" type="primary">serP2</name>
    <name evidence="6" type="ordered locus">llmg_0375</name>
</gene>
<feature type="chain" id="PRO_0000442543" description="DL-alanine permease SerP2">
    <location>
        <begin position="1"/>
        <end position="460"/>
    </location>
</feature>
<feature type="transmembrane region" description="Helical" evidence="1">
    <location>
        <begin position="26"/>
        <end position="46"/>
    </location>
</feature>
<feature type="transmembrane region" description="Helical" evidence="1">
    <location>
        <begin position="47"/>
        <end position="67"/>
    </location>
</feature>
<feature type="transmembrane region" description="Helical" evidence="1">
    <location>
        <begin position="98"/>
        <end position="118"/>
    </location>
</feature>
<feature type="transmembrane region" description="Helical" evidence="1">
    <location>
        <begin position="124"/>
        <end position="144"/>
    </location>
</feature>
<feature type="transmembrane region" description="Helical" evidence="1">
    <location>
        <begin position="160"/>
        <end position="180"/>
    </location>
</feature>
<feature type="transmembrane region" description="Helical" evidence="1">
    <location>
        <begin position="209"/>
        <end position="229"/>
    </location>
</feature>
<feature type="transmembrane region" description="Helical" evidence="1">
    <location>
        <begin position="246"/>
        <end position="266"/>
    </location>
</feature>
<feature type="transmembrane region" description="Helical" evidence="1">
    <location>
        <begin position="278"/>
        <end position="298"/>
    </location>
</feature>
<feature type="transmembrane region" description="Helical" evidence="1">
    <location>
        <begin position="344"/>
        <end position="364"/>
    </location>
</feature>
<feature type="transmembrane region" description="Helical" evidence="1">
    <location>
        <begin position="368"/>
        <end position="388"/>
    </location>
</feature>
<feature type="transmembrane region" description="Helical" evidence="1">
    <location>
        <begin position="410"/>
        <end position="430"/>
    </location>
</feature>
<feature type="transmembrane region" description="Helical" evidence="1">
    <location>
        <begin position="433"/>
        <end position="453"/>
    </location>
</feature>
<name>SERP2_LACLM</name>
<reference key="1">
    <citation type="journal article" date="2007" name="J. Bacteriol.">
        <title>The complete genome sequence of the lactic acid bacterial paradigm Lactococcus lactis subsp. cremoris MG1363.</title>
        <authorList>
            <person name="Wegmann U."/>
            <person name="O'Connell-Motherway M."/>
            <person name="Zomer A."/>
            <person name="Buist G."/>
            <person name="Shearman C."/>
            <person name="Canchaya C."/>
            <person name="Ventura M."/>
            <person name="Goesmann A."/>
            <person name="Gasson M.J."/>
            <person name="Kuipers O.P."/>
            <person name="van Sinderen D."/>
            <person name="Kok J."/>
        </authorList>
    </citation>
    <scope>NUCLEOTIDE SEQUENCE [LARGE SCALE GENOMIC DNA]</scope>
    <source>
        <strain>MG1363</strain>
    </source>
</reference>
<reference key="2">
    <citation type="journal article" date="2013" name="J. Bacteriol.">
        <title>Cloning, expression, and functional characterization of secondary amino acid transporters of Lactococcus lactis.</title>
        <authorList>
            <person name="Trip H."/>
            <person name="Mulder N.L."/>
            <person name="Lolkema J.S."/>
        </authorList>
    </citation>
    <scope>FUNCTION</scope>
    <source>
        <strain>MG1363</strain>
    </source>
</reference>
<reference key="3">
    <citation type="journal article" date="2015" name="J. Bacteriol.">
        <title>Physiology and substrate specificity of two closely related amino acid transporters, SerP1 and SerP2, of Lactococcus lactis.</title>
        <authorList>
            <person name="Noens E.E."/>
            <person name="Lolkema J.S."/>
        </authorList>
    </citation>
    <scope>FUNCTION</scope>
    <scope>BIOPHYSICOCHEMICAL PROPERTIES</scope>
    <scope>DISRUPTION PHENOTYPE</scope>
    <source>
        <strain>MG1363</strain>
    </source>
</reference>